<proteinExistence type="evidence at protein level"/>
<evidence type="ECO:0000250" key="1"/>
<evidence type="ECO:0000255" key="2"/>
<evidence type="ECO:0000305" key="3"/>
<reference key="1">
    <citation type="submission" date="2000-01" db="EMBL/GenBank/DDBJ databases">
        <title>Peroxisomal integral membrane proteins.</title>
        <authorList>
            <person name="Van Veldhoven P.P."/>
        </authorList>
    </citation>
    <scope>NUCLEOTIDE SEQUENCE [MRNA]</scope>
</reference>
<reference key="2">
    <citation type="journal article" date="2005" name="Science">
        <title>The transcriptional landscape of the mammalian genome.</title>
        <authorList>
            <person name="Carninci P."/>
            <person name="Kasukawa T."/>
            <person name="Katayama S."/>
            <person name="Gough J."/>
            <person name="Frith M.C."/>
            <person name="Maeda N."/>
            <person name="Oyama R."/>
            <person name="Ravasi T."/>
            <person name="Lenhard B."/>
            <person name="Wells C."/>
            <person name="Kodzius R."/>
            <person name="Shimokawa K."/>
            <person name="Bajic V.B."/>
            <person name="Brenner S.E."/>
            <person name="Batalov S."/>
            <person name="Forrest A.R."/>
            <person name="Zavolan M."/>
            <person name="Davis M.J."/>
            <person name="Wilming L.G."/>
            <person name="Aidinis V."/>
            <person name="Allen J.E."/>
            <person name="Ambesi-Impiombato A."/>
            <person name="Apweiler R."/>
            <person name="Aturaliya R.N."/>
            <person name="Bailey T.L."/>
            <person name="Bansal M."/>
            <person name="Baxter L."/>
            <person name="Beisel K.W."/>
            <person name="Bersano T."/>
            <person name="Bono H."/>
            <person name="Chalk A.M."/>
            <person name="Chiu K.P."/>
            <person name="Choudhary V."/>
            <person name="Christoffels A."/>
            <person name="Clutterbuck D.R."/>
            <person name="Crowe M.L."/>
            <person name="Dalla E."/>
            <person name="Dalrymple B.P."/>
            <person name="de Bono B."/>
            <person name="Della Gatta G."/>
            <person name="di Bernardo D."/>
            <person name="Down T."/>
            <person name="Engstrom P."/>
            <person name="Fagiolini M."/>
            <person name="Faulkner G."/>
            <person name="Fletcher C.F."/>
            <person name="Fukushima T."/>
            <person name="Furuno M."/>
            <person name="Futaki S."/>
            <person name="Gariboldi M."/>
            <person name="Georgii-Hemming P."/>
            <person name="Gingeras T.R."/>
            <person name="Gojobori T."/>
            <person name="Green R.E."/>
            <person name="Gustincich S."/>
            <person name="Harbers M."/>
            <person name="Hayashi Y."/>
            <person name="Hensch T.K."/>
            <person name="Hirokawa N."/>
            <person name="Hill D."/>
            <person name="Huminiecki L."/>
            <person name="Iacono M."/>
            <person name="Ikeo K."/>
            <person name="Iwama A."/>
            <person name="Ishikawa T."/>
            <person name="Jakt M."/>
            <person name="Kanapin A."/>
            <person name="Katoh M."/>
            <person name="Kawasawa Y."/>
            <person name="Kelso J."/>
            <person name="Kitamura H."/>
            <person name="Kitano H."/>
            <person name="Kollias G."/>
            <person name="Krishnan S.P."/>
            <person name="Kruger A."/>
            <person name="Kummerfeld S.K."/>
            <person name="Kurochkin I.V."/>
            <person name="Lareau L.F."/>
            <person name="Lazarevic D."/>
            <person name="Lipovich L."/>
            <person name="Liu J."/>
            <person name="Liuni S."/>
            <person name="McWilliam S."/>
            <person name="Madan Babu M."/>
            <person name="Madera M."/>
            <person name="Marchionni L."/>
            <person name="Matsuda H."/>
            <person name="Matsuzawa S."/>
            <person name="Miki H."/>
            <person name="Mignone F."/>
            <person name="Miyake S."/>
            <person name="Morris K."/>
            <person name="Mottagui-Tabar S."/>
            <person name="Mulder N."/>
            <person name="Nakano N."/>
            <person name="Nakauchi H."/>
            <person name="Ng P."/>
            <person name="Nilsson R."/>
            <person name="Nishiguchi S."/>
            <person name="Nishikawa S."/>
            <person name="Nori F."/>
            <person name="Ohara O."/>
            <person name="Okazaki Y."/>
            <person name="Orlando V."/>
            <person name="Pang K.C."/>
            <person name="Pavan W.J."/>
            <person name="Pavesi G."/>
            <person name="Pesole G."/>
            <person name="Petrovsky N."/>
            <person name="Piazza S."/>
            <person name="Reed J."/>
            <person name="Reid J.F."/>
            <person name="Ring B.Z."/>
            <person name="Ringwald M."/>
            <person name="Rost B."/>
            <person name="Ruan Y."/>
            <person name="Salzberg S.L."/>
            <person name="Sandelin A."/>
            <person name="Schneider C."/>
            <person name="Schoenbach C."/>
            <person name="Sekiguchi K."/>
            <person name="Semple C.A."/>
            <person name="Seno S."/>
            <person name="Sessa L."/>
            <person name="Sheng Y."/>
            <person name="Shibata Y."/>
            <person name="Shimada H."/>
            <person name="Shimada K."/>
            <person name="Silva D."/>
            <person name="Sinclair B."/>
            <person name="Sperling S."/>
            <person name="Stupka E."/>
            <person name="Sugiura K."/>
            <person name="Sultana R."/>
            <person name="Takenaka Y."/>
            <person name="Taki K."/>
            <person name="Tammoja K."/>
            <person name="Tan S.L."/>
            <person name="Tang S."/>
            <person name="Taylor M.S."/>
            <person name="Tegner J."/>
            <person name="Teichmann S.A."/>
            <person name="Ueda H.R."/>
            <person name="van Nimwegen E."/>
            <person name="Verardo R."/>
            <person name="Wei C.L."/>
            <person name="Yagi K."/>
            <person name="Yamanishi H."/>
            <person name="Zabarovsky E."/>
            <person name="Zhu S."/>
            <person name="Zimmer A."/>
            <person name="Hide W."/>
            <person name="Bult C."/>
            <person name="Grimmond S.M."/>
            <person name="Teasdale R.D."/>
            <person name="Liu E.T."/>
            <person name="Brusic V."/>
            <person name="Quackenbush J."/>
            <person name="Wahlestedt C."/>
            <person name="Mattick J.S."/>
            <person name="Hume D.A."/>
            <person name="Kai C."/>
            <person name="Sasaki D."/>
            <person name="Tomaru Y."/>
            <person name="Fukuda S."/>
            <person name="Kanamori-Katayama M."/>
            <person name="Suzuki M."/>
            <person name="Aoki J."/>
            <person name="Arakawa T."/>
            <person name="Iida J."/>
            <person name="Imamura K."/>
            <person name="Itoh M."/>
            <person name="Kato T."/>
            <person name="Kawaji H."/>
            <person name="Kawagashira N."/>
            <person name="Kawashima T."/>
            <person name="Kojima M."/>
            <person name="Kondo S."/>
            <person name="Konno H."/>
            <person name="Nakano K."/>
            <person name="Ninomiya N."/>
            <person name="Nishio T."/>
            <person name="Okada M."/>
            <person name="Plessy C."/>
            <person name="Shibata K."/>
            <person name="Shiraki T."/>
            <person name="Suzuki S."/>
            <person name="Tagami M."/>
            <person name="Waki K."/>
            <person name="Watahiki A."/>
            <person name="Okamura-Oho Y."/>
            <person name="Suzuki H."/>
            <person name="Kawai J."/>
            <person name="Hayashizaki Y."/>
        </authorList>
    </citation>
    <scope>NUCLEOTIDE SEQUENCE [LARGE SCALE MRNA]</scope>
    <source>
        <strain>C57BL/6J</strain>
        <strain>NOD</strain>
        <tissue>Embryonic head</tissue>
        <tissue>Heart</tissue>
        <tissue>Spleen</tissue>
        <tissue>Thymus</tissue>
    </source>
</reference>
<reference key="3">
    <citation type="journal article" date="2004" name="Genome Res.">
        <title>The status, quality, and expansion of the NIH full-length cDNA project: the Mammalian Gene Collection (MGC).</title>
        <authorList>
            <consortium name="The MGC Project Team"/>
        </authorList>
    </citation>
    <scope>NUCLEOTIDE SEQUENCE [LARGE SCALE MRNA]</scope>
    <source>
        <tissue>Liver</tissue>
    </source>
</reference>
<reference key="4">
    <citation type="journal article" date="2010" name="Cell">
        <title>A tissue-specific atlas of mouse protein phosphorylation and expression.</title>
        <authorList>
            <person name="Huttlin E.L."/>
            <person name="Jedrychowski M.P."/>
            <person name="Elias J.E."/>
            <person name="Goswami T."/>
            <person name="Rad R."/>
            <person name="Beausoleil S.A."/>
            <person name="Villen J."/>
            <person name="Haas W."/>
            <person name="Sowa M.E."/>
            <person name="Gygi S.P."/>
        </authorList>
    </citation>
    <scope>IDENTIFICATION BY MASS SPECTROMETRY [LARGE SCALE ANALYSIS]</scope>
    <source>
        <tissue>Brown adipose tissue</tissue>
        <tissue>Kidney</tissue>
        <tissue>Liver</tissue>
        <tissue>Lung</tissue>
        <tissue>Testis</tissue>
    </source>
</reference>
<protein>
    <recommendedName>
        <fullName>Peroxisomal membrane protein 4</fullName>
    </recommendedName>
    <alternativeName>
        <fullName>24 kDa peroxisomal intrinsic membrane protein</fullName>
    </alternativeName>
</protein>
<comment type="subunit">
    <text evidence="1">Interacts with PEX19.</text>
</comment>
<comment type="subcellular location">
    <subcellularLocation>
        <location evidence="1">Peroxisome membrane</location>
        <topology evidence="1">Multi-pass membrane protein</topology>
    </subcellularLocation>
</comment>
<comment type="similarity">
    <text evidence="3">Belongs to the peroxisomal membrane protein PXMP2/4 family.</text>
</comment>
<gene>
    <name type="primary">Pxmp4</name>
    <name type="synonym">Pmp24</name>
</gene>
<keyword id="KW-0325">Glycoprotein</keyword>
<keyword id="KW-0472">Membrane</keyword>
<keyword id="KW-0576">Peroxisome</keyword>
<keyword id="KW-1185">Reference proteome</keyword>
<keyword id="KW-0812">Transmembrane</keyword>
<keyword id="KW-1133">Transmembrane helix</keyword>
<feature type="chain" id="PRO_0000218933" description="Peroxisomal membrane protein 4">
    <location>
        <begin position="1"/>
        <end position="212"/>
    </location>
</feature>
<feature type="transmembrane region" description="Helical" evidence="2">
    <location>
        <begin position="97"/>
        <end position="117"/>
    </location>
</feature>
<feature type="transmembrane region" description="Helical" evidence="2">
    <location>
        <begin position="153"/>
        <end position="173"/>
    </location>
</feature>
<feature type="glycosylation site" description="N-linked (GlcNAc...) asparagine" evidence="2">
    <location>
        <position position="206"/>
    </location>
</feature>
<sequence length="212" mass="24196">MAAPPQLQALLQAVNKLLRQRRYHAALAVIKGFRNGAVYGVKIRAPHALVMTFLFRSGSLREKLQAILKATYIHSRNLACFVFAYKSLHALQSHVQGETHQMHSFLAAFIGGLLLFGENNNINSQINMYLTSRVLYALCRLGVEKGYIPALKWDPFPLHTAVIWGLVLWLFEYHRPTLQPSLQSSMTYLYEDSNVWHDLSDFLIFNKSHPSK</sequence>
<organism>
    <name type="scientific">Mus musculus</name>
    <name type="common">Mouse</name>
    <dbReference type="NCBI Taxonomy" id="10090"/>
    <lineage>
        <taxon>Eukaryota</taxon>
        <taxon>Metazoa</taxon>
        <taxon>Chordata</taxon>
        <taxon>Craniata</taxon>
        <taxon>Vertebrata</taxon>
        <taxon>Euteleostomi</taxon>
        <taxon>Mammalia</taxon>
        <taxon>Eutheria</taxon>
        <taxon>Euarchontoglires</taxon>
        <taxon>Glires</taxon>
        <taxon>Rodentia</taxon>
        <taxon>Myomorpha</taxon>
        <taxon>Muroidea</taxon>
        <taxon>Muridae</taxon>
        <taxon>Murinae</taxon>
        <taxon>Mus</taxon>
        <taxon>Mus</taxon>
    </lineage>
</organism>
<accession>Q9JJW0</accession>
<accession>Q3U0L9</accession>
<accession>Q9CQV9</accession>
<dbReference type="EMBL" id="AJ271476">
    <property type="protein sequence ID" value="CAB71345.1"/>
    <property type="molecule type" value="mRNA"/>
</dbReference>
<dbReference type="EMBL" id="AK003127">
    <property type="status" value="NOT_ANNOTATED_CDS"/>
    <property type="molecule type" value="mRNA"/>
</dbReference>
<dbReference type="EMBL" id="AK019381">
    <property type="status" value="NOT_ANNOTATED_CDS"/>
    <property type="molecule type" value="mRNA"/>
</dbReference>
<dbReference type="EMBL" id="AK050647">
    <property type="protein sequence ID" value="BAC34361.1"/>
    <property type="molecule type" value="mRNA"/>
</dbReference>
<dbReference type="EMBL" id="AK156743">
    <property type="protein sequence ID" value="BAE33833.1"/>
    <property type="molecule type" value="mRNA"/>
</dbReference>
<dbReference type="EMBL" id="BC025796">
    <property type="protein sequence ID" value="AAH25796.1"/>
    <property type="molecule type" value="mRNA"/>
</dbReference>
<dbReference type="CCDS" id="CCDS16936.1"/>
<dbReference type="RefSeq" id="NP_067509.1">
    <property type="nucleotide sequence ID" value="NM_021534.4"/>
</dbReference>
<dbReference type="FunCoup" id="Q9JJW0">
    <property type="interactions" value="270"/>
</dbReference>
<dbReference type="STRING" id="10090.ENSMUSP00000000896"/>
<dbReference type="GlyCosmos" id="Q9JJW0">
    <property type="glycosylation" value="1 site, No reported glycans"/>
</dbReference>
<dbReference type="GlyGen" id="Q9JJW0">
    <property type="glycosylation" value="2 sites, 1 O-linked glycan (1 site)"/>
</dbReference>
<dbReference type="PhosphoSitePlus" id="Q9JJW0"/>
<dbReference type="jPOST" id="Q9JJW0"/>
<dbReference type="PaxDb" id="10090-ENSMUSP00000000896"/>
<dbReference type="PeptideAtlas" id="Q9JJW0"/>
<dbReference type="ProteomicsDB" id="301955"/>
<dbReference type="Pumba" id="Q9JJW0"/>
<dbReference type="Antibodypedia" id="54645">
    <property type="antibodies" value="128 antibodies from 22 providers"/>
</dbReference>
<dbReference type="DNASU" id="59038"/>
<dbReference type="Ensembl" id="ENSMUST00000000896.11">
    <property type="protein sequence ID" value="ENSMUSP00000000896.5"/>
    <property type="gene ID" value="ENSMUSG00000000876.12"/>
</dbReference>
<dbReference type="GeneID" id="59038"/>
<dbReference type="KEGG" id="mmu:59038"/>
<dbReference type="UCSC" id="uc008njm.1">
    <property type="organism name" value="mouse"/>
</dbReference>
<dbReference type="AGR" id="MGI:1891701"/>
<dbReference type="CTD" id="11264"/>
<dbReference type="MGI" id="MGI:1891701">
    <property type="gene designation" value="Pxmp4"/>
</dbReference>
<dbReference type="VEuPathDB" id="HostDB:ENSMUSG00000000876"/>
<dbReference type="eggNOG" id="ENOG502RXMH">
    <property type="taxonomic scope" value="Eukaryota"/>
</dbReference>
<dbReference type="GeneTree" id="ENSGT00390000001562"/>
<dbReference type="HOGENOM" id="CLU_054132_1_0_1"/>
<dbReference type="InParanoid" id="Q9JJW0"/>
<dbReference type="OMA" id="VMVFLFR"/>
<dbReference type="OrthoDB" id="39659at2759"/>
<dbReference type="PhylomeDB" id="Q9JJW0"/>
<dbReference type="TreeFam" id="TF105313"/>
<dbReference type="Reactome" id="R-MMU-9603798">
    <property type="pathway name" value="Class I peroxisomal membrane protein import"/>
</dbReference>
<dbReference type="BioGRID-ORCS" id="59038">
    <property type="hits" value="1 hit in 77 CRISPR screens"/>
</dbReference>
<dbReference type="ChiTaRS" id="Pxmp4">
    <property type="organism name" value="mouse"/>
</dbReference>
<dbReference type="PRO" id="PR:Q9JJW0"/>
<dbReference type="Proteomes" id="UP000000589">
    <property type="component" value="Chromosome 2"/>
</dbReference>
<dbReference type="RNAct" id="Q9JJW0">
    <property type="molecule type" value="protein"/>
</dbReference>
<dbReference type="Bgee" id="ENSMUSG00000000876">
    <property type="expression patterns" value="Expressed in right kidney and 198 other cell types or tissues"/>
</dbReference>
<dbReference type="ExpressionAtlas" id="Q9JJW0">
    <property type="expression patterns" value="baseline and differential"/>
</dbReference>
<dbReference type="GO" id="GO:0005778">
    <property type="term" value="C:peroxisomal membrane"/>
    <property type="evidence" value="ECO:0007669"/>
    <property type="project" value="UniProtKB-SubCell"/>
</dbReference>
<dbReference type="GO" id="GO:0046485">
    <property type="term" value="P:ether lipid metabolic process"/>
    <property type="evidence" value="ECO:0000315"/>
    <property type="project" value="MGI"/>
</dbReference>
<dbReference type="InterPro" id="IPR019531">
    <property type="entry name" value="Pmp4"/>
</dbReference>
<dbReference type="PANTHER" id="PTHR15460">
    <property type="entry name" value="PEROXISOMAL MEMBRANE PROTEIN 4"/>
    <property type="match status" value="1"/>
</dbReference>
<dbReference type="PANTHER" id="PTHR15460:SF3">
    <property type="entry name" value="PEROXISOMAL MEMBRANE PROTEIN 4"/>
    <property type="match status" value="1"/>
</dbReference>
<dbReference type="Pfam" id="PF02466">
    <property type="entry name" value="Tim17"/>
    <property type="match status" value="1"/>
</dbReference>
<dbReference type="PIRSF" id="PIRSF013674">
    <property type="entry name" value="PXMP4"/>
    <property type="match status" value="1"/>
</dbReference>
<name>PXMP4_MOUSE</name>